<feature type="initiator methionine" description="Removed" evidence="1">
    <location>
        <position position="1"/>
    </location>
</feature>
<feature type="chain" id="PRO_0000078468" description="Chaperone protein DnaK">
    <location>
        <begin position="2"/>
        <end position="635"/>
    </location>
</feature>
<feature type="region of interest" description="Disordered" evidence="2">
    <location>
        <begin position="602"/>
        <end position="635"/>
    </location>
</feature>
<feature type="compositionally biased region" description="Low complexity" evidence="2">
    <location>
        <begin position="602"/>
        <end position="617"/>
    </location>
</feature>
<feature type="modified residue" description="Phosphothreonine; by autocatalysis" evidence="1">
    <location>
        <position position="198"/>
    </location>
</feature>
<dbReference type="EMBL" id="L42023">
    <property type="protein sequence ID" value="AAC22889.1"/>
    <property type="molecule type" value="Genomic_DNA"/>
</dbReference>
<dbReference type="PIR" id="B64112">
    <property type="entry name" value="B64112"/>
</dbReference>
<dbReference type="RefSeq" id="NP_439393.1">
    <property type="nucleotide sequence ID" value="NC_000907.1"/>
</dbReference>
<dbReference type="SMR" id="P43736"/>
<dbReference type="STRING" id="71421.HI_1237"/>
<dbReference type="EnsemblBacteria" id="AAC22889">
    <property type="protein sequence ID" value="AAC22889"/>
    <property type="gene ID" value="HI_1237"/>
</dbReference>
<dbReference type="KEGG" id="hin:HI_1237"/>
<dbReference type="PATRIC" id="fig|71421.8.peg.1289"/>
<dbReference type="eggNOG" id="COG0443">
    <property type="taxonomic scope" value="Bacteria"/>
</dbReference>
<dbReference type="HOGENOM" id="CLU_005965_2_1_6"/>
<dbReference type="OrthoDB" id="9766019at2"/>
<dbReference type="PhylomeDB" id="P43736"/>
<dbReference type="BioCyc" id="HINF71421:G1GJ1-1267-MONOMER"/>
<dbReference type="Proteomes" id="UP000000579">
    <property type="component" value="Chromosome"/>
</dbReference>
<dbReference type="GO" id="GO:0005829">
    <property type="term" value="C:cytosol"/>
    <property type="evidence" value="ECO:0000318"/>
    <property type="project" value="GO_Central"/>
</dbReference>
<dbReference type="GO" id="GO:0005524">
    <property type="term" value="F:ATP binding"/>
    <property type="evidence" value="ECO:0007669"/>
    <property type="project" value="UniProtKB-UniRule"/>
</dbReference>
<dbReference type="GO" id="GO:0016887">
    <property type="term" value="F:ATP hydrolysis activity"/>
    <property type="evidence" value="ECO:0000318"/>
    <property type="project" value="GO_Central"/>
</dbReference>
<dbReference type="GO" id="GO:0140662">
    <property type="term" value="F:ATP-dependent protein folding chaperone"/>
    <property type="evidence" value="ECO:0007669"/>
    <property type="project" value="InterPro"/>
</dbReference>
<dbReference type="GO" id="GO:0031072">
    <property type="term" value="F:heat shock protein binding"/>
    <property type="evidence" value="ECO:0000318"/>
    <property type="project" value="GO_Central"/>
</dbReference>
<dbReference type="GO" id="GO:0044183">
    <property type="term" value="F:protein folding chaperone"/>
    <property type="evidence" value="ECO:0000318"/>
    <property type="project" value="GO_Central"/>
</dbReference>
<dbReference type="GO" id="GO:0051082">
    <property type="term" value="F:unfolded protein binding"/>
    <property type="evidence" value="ECO:0007669"/>
    <property type="project" value="InterPro"/>
</dbReference>
<dbReference type="GO" id="GO:0051085">
    <property type="term" value="P:chaperone cofactor-dependent protein refolding"/>
    <property type="evidence" value="ECO:0000318"/>
    <property type="project" value="GO_Central"/>
</dbReference>
<dbReference type="GO" id="GO:0042026">
    <property type="term" value="P:protein refolding"/>
    <property type="evidence" value="ECO:0000318"/>
    <property type="project" value="GO_Central"/>
</dbReference>
<dbReference type="CDD" id="cd10234">
    <property type="entry name" value="ASKHA_NBD_HSP70_DnaK-like"/>
    <property type="match status" value="1"/>
</dbReference>
<dbReference type="FunFam" id="2.60.34.10:FF:000014">
    <property type="entry name" value="Chaperone protein DnaK HSP70"/>
    <property type="match status" value="1"/>
</dbReference>
<dbReference type="FunFam" id="3.30.30.30:FF:000003">
    <property type="entry name" value="Heat shock protein 9"/>
    <property type="match status" value="1"/>
</dbReference>
<dbReference type="FunFam" id="1.20.1270.10:FF:000001">
    <property type="entry name" value="Molecular chaperone DnaK"/>
    <property type="match status" value="1"/>
</dbReference>
<dbReference type="FunFam" id="3.30.420.40:FF:000004">
    <property type="entry name" value="Molecular chaperone DnaK"/>
    <property type="match status" value="1"/>
</dbReference>
<dbReference type="FunFam" id="3.90.640.10:FF:000003">
    <property type="entry name" value="Molecular chaperone DnaK"/>
    <property type="match status" value="1"/>
</dbReference>
<dbReference type="Gene3D" id="1.20.1270.10">
    <property type="match status" value="1"/>
</dbReference>
<dbReference type="Gene3D" id="3.30.420.40">
    <property type="match status" value="2"/>
</dbReference>
<dbReference type="Gene3D" id="3.90.640.10">
    <property type="entry name" value="Actin, Chain A, domain 4"/>
    <property type="match status" value="1"/>
</dbReference>
<dbReference type="Gene3D" id="2.60.34.10">
    <property type="entry name" value="Substrate Binding Domain Of DNAk, Chain A, domain 1"/>
    <property type="match status" value="1"/>
</dbReference>
<dbReference type="HAMAP" id="MF_00332">
    <property type="entry name" value="DnaK"/>
    <property type="match status" value="1"/>
</dbReference>
<dbReference type="InterPro" id="IPR043129">
    <property type="entry name" value="ATPase_NBD"/>
</dbReference>
<dbReference type="InterPro" id="IPR012725">
    <property type="entry name" value="Chaperone_DnaK"/>
</dbReference>
<dbReference type="InterPro" id="IPR018181">
    <property type="entry name" value="Heat_shock_70_CS"/>
</dbReference>
<dbReference type="InterPro" id="IPR029048">
    <property type="entry name" value="HSP70_C_sf"/>
</dbReference>
<dbReference type="InterPro" id="IPR029047">
    <property type="entry name" value="HSP70_peptide-bd_sf"/>
</dbReference>
<dbReference type="InterPro" id="IPR013126">
    <property type="entry name" value="Hsp_70_fam"/>
</dbReference>
<dbReference type="NCBIfam" id="NF001413">
    <property type="entry name" value="PRK00290.1"/>
    <property type="match status" value="1"/>
</dbReference>
<dbReference type="NCBIfam" id="TIGR02350">
    <property type="entry name" value="prok_dnaK"/>
    <property type="match status" value="1"/>
</dbReference>
<dbReference type="PANTHER" id="PTHR19375">
    <property type="entry name" value="HEAT SHOCK PROTEIN 70KDA"/>
    <property type="match status" value="1"/>
</dbReference>
<dbReference type="Pfam" id="PF00012">
    <property type="entry name" value="HSP70"/>
    <property type="match status" value="1"/>
</dbReference>
<dbReference type="PRINTS" id="PR00301">
    <property type="entry name" value="HEATSHOCK70"/>
</dbReference>
<dbReference type="SUPFAM" id="SSF53067">
    <property type="entry name" value="Actin-like ATPase domain"/>
    <property type="match status" value="2"/>
</dbReference>
<dbReference type="SUPFAM" id="SSF100934">
    <property type="entry name" value="Heat shock protein 70kD (HSP70), C-terminal subdomain"/>
    <property type="match status" value="1"/>
</dbReference>
<dbReference type="SUPFAM" id="SSF100920">
    <property type="entry name" value="Heat shock protein 70kD (HSP70), peptide-binding domain"/>
    <property type="match status" value="1"/>
</dbReference>
<dbReference type="PROSITE" id="PS00297">
    <property type="entry name" value="HSP70_1"/>
    <property type="match status" value="1"/>
</dbReference>
<dbReference type="PROSITE" id="PS00329">
    <property type="entry name" value="HSP70_2"/>
    <property type="match status" value="1"/>
</dbReference>
<dbReference type="PROSITE" id="PS01036">
    <property type="entry name" value="HSP70_3"/>
    <property type="match status" value="1"/>
</dbReference>
<protein>
    <recommendedName>
        <fullName>Chaperone protein DnaK</fullName>
    </recommendedName>
    <alternativeName>
        <fullName>HSP70</fullName>
    </alternativeName>
    <alternativeName>
        <fullName>Heat shock 70 kDa protein</fullName>
    </alternativeName>
    <alternativeName>
        <fullName>Heat shock protein 70</fullName>
    </alternativeName>
</protein>
<reference key="1">
    <citation type="journal article" date="1995" name="Science">
        <title>Whole-genome random sequencing and assembly of Haemophilus influenzae Rd.</title>
        <authorList>
            <person name="Fleischmann R.D."/>
            <person name="Adams M.D."/>
            <person name="White O."/>
            <person name="Clayton R.A."/>
            <person name="Kirkness E.F."/>
            <person name="Kerlavage A.R."/>
            <person name="Bult C.J."/>
            <person name="Tomb J.-F."/>
            <person name="Dougherty B.A."/>
            <person name="Merrick J.M."/>
            <person name="McKenney K."/>
            <person name="Sutton G.G."/>
            <person name="FitzHugh W."/>
            <person name="Fields C.A."/>
            <person name="Gocayne J.D."/>
            <person name="Scott J.D."/>
            <person name="Shirley R."/>
            <person name="Liu L.-I."/>
            <person name="Glodek A."/>
            <person name="Kelley J.M."/>
            <person name="Weidman J.F."/>
            <person name="Phillips C.A."/>
            <person name="Spriggs T."/>
            <person name="Hedblom E."/>
            <person name="Cotton M.D."/>
            <person name="Utterback T.R."/>
            <person name="Hanna M.C."/>
            <person name="Nguyen D.T."/>
            <person name="Saudek D.M."/>
            <person name="Brandon R.C."/>
            <person name="Fine L.D."/>
            <person name="Fritchman J.L."/>
            <person name="Fuhrmann J.L."/>
            <person name="Geoghagen N.S.M."/>
            <person name="Gnehm C.L."/>
            <person name="McDonald L.A."/>
            <person name="Small K.V."/>
            <person name="Fraser C.M."/>
            <person name="Smith H.O."/>
            <person name="Venter J.C."/>
        </authorList>
    </citation>
    <scope>NUCLEOTIDE SEQUENCE [LARGE SCALE GENOMIC DNA]</scope>
    <source>
        <strain>ATCC 51907 / DSM 11121 / KW20 / Rd</strain>
    </source>
</reference>
<name>DNAK_HAEIN</name>
<sequence>MGKIIGIDLGTTNSCVAVMDGDKARVIENAEGARTTPSIIAYTDNETLVGQPAKRQAITNPKNTLFAIKRLIGRRFESEEVQRDIKIMPFEITRADNGDAWVNVKGDKLAPPQISAEVLKKMKKTAEDFLGESVTEAVITVPAYFNDAQRQATIDAGKIAGLDVKRIINEPTAAALAFGLGSSKENQVIAVYDLGGGTFDISIIEIDNFDGEQTFEVLATGGNTHLGGEDFDNRVIDYIIDEFKKEQNIDLRNDAMALQRVKEAAEKAKIELSSAQSTEVNLPYITADATGPKHLALNITRAKLEALVEDLVASSIESLKAVLKDADKGVSEIHDIILVGGQTRMPLVQQKVAEFFGKEARKDVNPDEAVAIGAAVQGGVLKGDVKDVLLLDVTPLSLGIETMGGVMTTLIEKNTTIPTKKSQVFSTAEDNQSAVTIHVLQGERKRAADNKSLGQFNLEGINPAPRGMPQIEVTFDIDANGVINVSAKDKNTGKEQQIRIQASSGLSDEEIQQMVRDAEANADADRKFEEVVQARNQADGIAHATRKQIAEAGDALSVADKEKIEAAVAELETAAKGEDKAEIEAKIEAVIKASEPLMQAVQAKAQQAGGEQPQQSSAKDDGVVDAEFEEVKDNK</sequence>
<proteinExistence type="inferred from homology"/>
<organism>
    <name type="scientific">Haemophilus influenzae (strain ATCC 51907 / DSM 11121 / KW20 / Rd)</name>
    <dbReference type="NCBI Taxonomy" id="71421"/>
    <lineage>
        <taxon>Bacteria</taxon>
        <taxon>Pseudomonadati</taxon>
        <taxon>Pseudomonadota</taxon>
        <taxon>Gammaproteobacteria</taxon>
        <taxon>Pasteurellales</taxon>
        <taxon>Pasteurellaceae</taxon>
        <taxon>Haemophilus</taxon>
    </lineage>
</organism>
<comment type="function">
    <text evidence="1">Acts as a chaperone.</text>
</comment>
<comment type="induction">
    <text evidence="1">By stress conditions e.g. heat shock (By similarity).</text>
</comment>
<comment type="similarity">
    <text evidence="3">Belongs to the heat shock protein 70 family.</text>
</comment>
<accession>P43736</accession>
<gene>
    <name type="primary">dnaK</name>
    <name type="ordered locus">HI_1237</name>
</gene>
<evidence type="ECO:0000250" key="1"/>
<evidence type="ECO:0000256" key="2">
    <source>
        <dbReference type="SAM" id="MobiDB-lite"/>
    </source>
</evidence>
<evidence type="ECO:0000305" key="3"/>
<keyword id="KW-0067">ATP-binding</keyword>
<keyword id="KW-0143">Chaperone</keyword>
<keyword id="KW-0547">Nucleotide-binding</keyword>
<keyword id="KW-0597">Phosphoprotein</keyword>
<keyword id="KW-1185">Reference proteome</keyword>
<keyword id="KW-0346">Stress response</keyword>